<comment type="function">
    <text evidence="2 4 5">Antigen-presenting protein that binds self and non-self glycolipids and presents them to T-cell receptors on natural killer T-cells.</text>
</comment>
<comment type="subunit">
    <text evidence="2 3 4 5 6 7">Heterodimer with B2M (beta-2-microglobulin). Interacts with MHC II and CD74.</text>
</comment>
<comment type="subcellular location">
    <subcellularLocation>
        <location evidence="2">Cell membrane</location>
        <topology evidence="2">Single-pass type I membrane protein</topology>
    </subcellularLocation>
    <subcellularLocation>
        <location evidence="2">Endosome membrane</location>
    </subcellularLocation>
    <subcellularLocation>
        <location evidence="2">Lysosome membrane</location>
    </subcellularLocation>
    <text evidence="2">Subject to intracellular trafficking between the cell membrane, endosomes and lysosomes.</text>
</comment>
<comment type="tissue specificity">
    <text>Expressed on cortical thymocytes, on certain T-cell leukemias, and in various other tissues.</text>
</comment>
<comment type="PTM">
    <text evidence="2 3 4 5 6">N-glycosylated.</text>
</comment>
<comment type="miscellaneous">
    <text>During protein synthesis and maturation, CD1 family members bind endogenous lipids that are replaced by lipid or glycolipid antigens when the proteins are internalized and pass through endosomes, before trafficking back to the cell surface.</text>
</comment>
<comment type="online information" name="Functional Glycomics Gateway - Glycan Binding">
    <link uri="http://www.functionalglycomics.org/glycomics/GBPServlet?&amp;operationType=view&amp;cbpId=cbp_mou_TCRant_00004"/>
    <text>CD1d1</text>
</comment>
<feature type="signal peptide" evidence="1">
    <location>
        <begin position="1"/>
        <end position="21"/>
    </location>
</feature>
<feature type="chain" id="PRO_0000014591" description="Antigen-presenting glycoprotein CD1d1">
    <location>
        <begin position="22"/>
        <end position="336"/>
    </location>
</feature>
<feature type="topological domain" description="Extracellular" evidence="1">
    <location>
        <begin position="22"/>
        <end position="305"/>
    </location>
</feature>
<feature type="transmembrane region" description="Helical" evidence="1">
    <location>
        <begin position="306"/>
        <end position="326"/>
    </location>
</feature>
<feature type="topological domain" description="Cytoplasmic" evidence="1">
    <location>
        <begin position="327"/>
        <end position="336"/>
    </location>
</feature>
<feature type="domain" description="Ig-like">
    <location>
        <begin position="207"/>
        <end position="297"/>
    </location>
</feature>
<feature type="short sequence motif" description="Internalization signal">
    <location>
        <begin position="332"/>
        <end position="335"/>
    </location>
</feature>
<feature type="binding site" evidence="3 5 6 10 12 13">
    <location>
        <position position="98"/>
    </location>
    <ligand>
        <name>a D-galactosylceramide</name>
        <dbReference type="ChEBI" id="CHEBI:36498"/>
    </ligand>
</feature>
<feature type="binding site" evidence="3 4 5 6 10 11 12 13">
    <location>
        <begin position="171"/>
        <end position="174"/>
    </location>
    <ligand>
        <name>a D-galactosylceramide</name>
        <dbReference type="ChEBI" id="CHEBI:36498"/>
    </ligand>
</feature>
<feature type="glycosylation site" description="N-linked (GlcNAc...) asparagine" evidence="1">
    <location>
        <position position="25"/>
    </location>
</feature>
<feature type="glycosylation site" description="N-linked (GlcNAc...) asparagine" evidence="3 4 6">
    <location>
        <position position="38"/>
    </location>
</feature>
<feature type="glycosylation site" description="N-linked (GlcNAc...) asparagine" evidence="3 4 6">
    <location>
        <position position="60"/>
    </location>
</feature>
<feature type="glycosylation site" description="N-linked (GlcNAc...) asparagine" evidence="1">
    <location>
        <position position="128"/>
    </location>
</feature>
<feature type="glycosylation site" description="N-linked (GlcNAc...) asparagine" evidence="3 4 6">
    <location>
        <position position="183"/>
    </location>
</feature>
<feature type="disulfide bond" evidence="3 4 5 6 7 9 10 11 12 13">
    <location>
        <begin position="122"/>
        <end position="186"/>
    </location>
</feature>
<feature type="disulfide bond" evidence="3 4 5 6 7 9 10 11 12 13">
    <location>
        <begin position="226"/>
        <end position="281"/>
    </location>
</feature>
<feature type="sequence conflict" description="In Ref. 2; BAB22206 and 3; CAA31568." evidence="8" ref="2 3">
    <original>D</original>
    <variation>H</variation>
    <location>
        <position position="219"/>
    </location>
</feature>
<feature type="sequence conflict" description="In Ref. 1; AAA37391." evidence="8" ref="1">
    <original>W</original>
    <variation>C</variation>
    <location>
        <position position="240"/>
    </location>
</feature>
<feature type="strand" evidence="15">
    <location>
        <begin position="26"/>
        <end position="38"/>
    </location>
</feature>
<feature type="strand" evidence="15">
    <location>
        <begin position="41"/>
        <end position="50"/>
    </location>
</feature>
<feature type="strand" evidence="15">
    <location>
        <begin position="53"/>
        <end position="58"/>
    </location>
</feature>
<feature type="strand" evidence="15">
    <location>
        <begin position="66"/>
        <end position="69"/>
    </location>
</feature>
<feature type="turn" evidence="15">
    <location>
        <begin position="70"/>
        <end position="75"/>
    </location>
</feature>
<feature type="helix" evidence="15">
    <location>
        <begin position="78"/>
        <end position="105"/>
    </location>
</feature>
<feature type="turn" evidence="19">
    <location>
        <begin position="107"/>
        <end position="109"/>
    </location>
</feature>
<feature type="strand" evidence="15">
    <location>
        <begin position="112"/>
        <end position="124"/>
    </location>
</feature>
<feature type="strand" evidence="16">
    <location>
        <begin position="126"/>
        <end position="128"/>
    </location>
</feature>
<feature type="strand" evidence="15">
    <location>
        <begin position="130"/>
        <end position="138"/>
    </location>
</feature>
<feature type="strand" evidence="15">
    <location>
        <begin position="141"/>
        <end position="147"/>
    </location>
</feature>
<feature type="strand" evidence="15">
    <location>
        <begin position="150"/>
        <end position="153"/>
    </location>
</feature>
<feature type="helix" evidence="15">
    <location>
        <begin position="159"/>
        <end position="161"/>
    </location>
</feature>
<feature type="helix" evidence="15">
    <location>
        <begin position="162"/>
        <end position="170"/>
    </location>
</feature>
<feature type="helix" evidence="15">
    <location>
        <begin position="172"/>
        <end position="183"/>
    </location>
</feature>
<feature type="helix" evidence="15">
    <location>
        <begin position="185"/>
        <end position="196"/>
    </location>
</feature>
<feature type="helix" evidence="15">
    <location>
        <begin position="198"/>
        <end position="201"/>
    </location>
</feature>
<feature type="strand" evidence="15">
    <location>
        <begin position="208"/>
        <end position="214"/>
    </location>
</feature>
<feature type="strand" evidence="14">
    <location>
        <begin position="217"/>
        <end position="220"/>
    </location>
</feature>
<feature type="strand" evidence="15">
    <location>
        <begin position="222"/>
        <end position="234"/>
    </location>
</feature>
<feature type="strand" evidence="15">
    <location>
        <begin position="237"/>
        <end position="242"/>
    </location>
</feature>
<feature type="strand" evidence="17">
    <location>
        <begin position="250"/>
        <end position="252"/>
    </location>
</feature>
<feature type="strand" evidence="18">
    <location>
        <begin position="256"/>
        <end position="258"/>
    </location>
</feature>
<feature type="turn" evidence="18">
    <location>
        <begin position="259"/>
        <end position="261"/>
    </location>
</feature>
<feature type="strand" evidence="15">
    <location>
        <begin position="263"/>
        <end position="271"/>
    </location>
</feature>
<feature type="turn" evidence="15">
    <location>
        <begin position="273"/>
        <end position="278"/>
    </location>
</feature>
<feature type="strand" evidence="15">
    <location>
        <begin position="279"/>
        <end position="284"/>
    </location>
</feature>
<feature type="helix" evidence="15">
    <location>
        <begin position="286"/>
        <end position="288"/>
    </location>
</feature>
<feature type="strand" evidence="15">
    <location>
        <begin position="293"/>
        <end position="296"/>
    </location>
</feature>
<keyword id="KW-0002">3D-structure</keyword>
<keyword id="KW-1003">Cell membrane</keyword>
<keyword id="KW-1015">Disulfide bond</keyword>
<keyword id="KW-0967">Endosome</keyword>
<keyword id="KW-0325">Glycoprotein</keyword>
<keyword id="KW-0391">Immunity</keyword>
<keyword id="KW-0393">Immunoglobulin domain</keyword>
<keyword id="KW-0399">Innate immunity</keyword>
<keyword id="KW-0458">Lysosome</keyword>
<keyword id="KW-0472">Membrane</keyword>
<keyword id="KW-1185">Reference proteome</keyword>
<keyword id="KW-0732">Signal</keyword>
<keyword id="KW-0812">Transmembrane</keyword>
<keyword id="KW-1133">Transmembrane helix</keyword>
<protein>
    <recommendedName>
        <fullName>Antigen-presenting glycoprotein CD1d1</fullName>
    </recommendedName>
    <cdAntigenName>CD1d.1</cdAntigenName>
</protein>
<evidence type="ECO:0000255" key="1"/>
<evidence type="ECO:0000269" key="2">
    <source>
    </source>
</evidence>
<evidence type="ECO:0000269" key="3">
    <source>
    </source>
</evidence>
<evidence type="ECO:0000269" key="4">
    <source>
    </source>
</evidence>
<evidence type="ECO:0000269" key="5">
    <source>
    </source>
</evidence>
<evidence type="ECO:0000269" key="6">
    <source>
    </source>
</evidence>
<evidence type="ECO:0000269" key="7">
    <source>
    </source>
</evidence>
<evidence type="ECO:0000305" key="8"/>
<evidence type="ECO:0007744" key="9">
    <source>
        <dbReference type="PDB" id="1CD1"/>
    </source>
</evidence>
<evidence type="ECO:0007744" key="10">
    <source>
        <dbReference type="PDB" id="1Z5L"/>
    </source>
</evidence>
<evidence type="ECO:0007744" key="11">
    <source>
        <dbReference type="PDB" id="1ZHN"/>
    </source>
</evidence>
<evidence type="ECO:0007744" key="12">
    <source>
        <dbReference type="PDB" id="2AKR"/>
    </source>
</evidence>
<evidence type="ECO:0007744" key="13">
    <source>
        <dbReference type="PDB" id="2FIK"/>
    </source>
</evidence>
<evidence type="ECO:0007829" key="14">
    <source>
        <dbReference type="PDB" id="1CD1"/>
    </source>
</evidence>
<evidence type="ECO:0007829" key="15">
    <source>
        <dbReference type="PDB" id="3G08"/>
    </source>
</evidence>
<evidence type="ECO:0007829" key="16">
    <source>
        <dbReference type="PDB" id="3GML"/>
    </source>
</evidence>
<evidence type="ECO:0007829" key="17">
    <source>
        <dbReference type="PDB" id="3TA3"/>
    </source>
</evidence>
<evidence type="ECO:0007829" key="18">
    <source>
        <dbReference type="PDB" id="4Y4H"/>
    </source>
</evidence>
<evidence type="ECO:0007829" key="19">
    <source>
        <dbReference type="PDB" id="6C6F"/>
    </source>
</evidence>
<organism>
    <name type="scientific">Mus musculus</name>
    <name type="common">Mouse</name>
    <dbReference type="NCBI Taxonomy" id="10090"/>
    <lineage>
        <taxon>Eukaryota</taxon>
        <taxon>Metazoa</taxon>
        <taxon>Chordata</taxon>
        <taxon>Craniata</taxon>
        <taxon>Vertebrata</taxon>
        <taxon>Euteleostomi</taxon>
        <taxon>Mammalia</taxon>
        <taxon>Eutheria</taxon>
        <taxon>Euarchontoglires</taxon>
        <taxon>Glires</taxon>
        <taxon>Rodentia</taxon>
        <taxon>Myomorpha</taxon>
        <taxon>Muroidea</taxon>
        <taxon>Muridae</taxon>
        <taxon>Murinae</taxon>
        <taxon>Mus</taxon>
        <taxon>Mus</taxon>
    </lineage>
</organism>
<accession>P11609</accession>
<accession>Q91XK9</accession>
<name>CD1D1_MOUSE</name>
<dbReference type="EMBL" id="M63695">
    <property type="protein sequence ID" value="AAA37391.1"/>
    <property type="molecule type" value="mRNA"/>
</dbReference>
<dbReference type="EMBL" id="AK002582">
    <property type="protein sequence ID" value="BAB22206.1"/>
    <property type="molecule type" value="mRNA"/>
</dbReference>
<dbReference type="EMBL" id="X13170">
    <property type="protein sequence ID" value="CAA31568.1"/>
    <property type="molecule type" value="Genomic_DNA"/>
</dbReference>
<dbReference type="CCDS" id="CCDS17449.1"/>
<dbReference type="PIR" id="I49581">
    <property type="entry name" value="I49581"/>
</dbReference>
<dbReference type="PIR" id="S01297">
    <property type="entry name" value="S01297"/>
</dbReference>
<dbReference type="RefSeq" id="NP_031665.2">
    <property type="nucleotide sequence ID" value="NM_007639.3"/>
</dbReference>
<dbReference type="PDB" id="1CD1">
    <property type="method" value="X-ray"/>
    <property type="resolution" value="2.67 A"/>
    <property type="chains" value="A/C=22-336"/>
</dbReference>
<dbReference type="PDB" id="1Z5L">
    <property type="method" value="X-ray"/>
    <property type="resolution" value="2.20 A"/>
    <property type="chains" value="A/C=19-297"/>
</dbReference>
<dbReference type="PDB" id="1ZHN">
    <property type="method" value="X-ray"/>
    <property type="resolution" value="2.80 A"/>
    <property type="chains" value="A=25-297"/>
</dbReference>
<dbReference type="PDB" id="2AKR">
    <property type="method" value="X-ray"/>
    <property type="resolution" value="1.90 A"/>
    <property type="chains" value="A/C=19-297"/>
</dbReference>
<dbReference type="PDB" id="2FIK">
    <property type="method" value="X-ray"/>
    <property type="resolution" value="1.80 A"/>
    <property type="chains" value="A=19-297"/>
</dbReference>
<dbReference type="PDB" id="2GAZ">
    <property type="method" value="X-ray"/>
    <property type="resolution" value="2.61 A"/>
    <property type="chains" value="A=19-297"/>
</dbReference>
<dbReference type="PDB" id="2Q7Y">
    <property type="method" value="X-ray"/>
    <property type="resolution" value="1.95 A"/>
    <property type="chains" value="A/C=19-297"/>
</dbReference>
<dbReference type="PDB" id="3ARB">
    <property type="method" value="X-ray"/>
    <property type="resolution" value="2.70 A"/>
    <property type="chains" value="A=19-297"/>
</dbReference>
<dbReference type="PDB" id="3ARD">
    <property type="method" value="X-ray"/>
    <property type="resolution" value="3.01 A"/>
    <property type="chains" value="A=19-297"/>
</dbReference>
<dbReference type="PDB" id="3ARE">
    <property type="method" value="X-ray"/>
    <property type="resolution" value="2.80 A"/>
    <property type="chains" value="A=19-297"/>
</dbReference>
<dbReference type="PDB" id="3ARF">
    <property type="method" value="X-ray"/>
    <property type="resolution" value="2.90 A"/>
    <property type="chains" value="A=19-297"/>
</dbReference>
<dbReference type="PDB" id="3ARG">
    <property type="method" value="X-ray"/>
    <property type="resolution" value="3.00 A"/>
    <property type="chains" value="A=19-297"/>
</dbReference>
<dbReference type="PDB" id="3AU1">
    <property type="method" value="X-ray"/>
    <property type="resolution" value="2.50 A"/>
    <property type="chains" value="A=19-297"/>
</dbReference>
<dbReference type="PDB" id="3G08">
    <property type="method" value="X-ray"/>
    <property type="resolution" value="1.60 A"/>
    <property type="chains" value="A=19-297"/>
</dbReference>
<dbReference type="PDB" id="3GML">
    <property type="method" value="X-ray"/>
    <property type="resolution" value="1.70 A"/>
    <property type="chains" value="A=19-297"/>
</dbReference>
<dbReference type="PDB" id="3GMM">
    <property type="method" value="X-ray"/>
    <property type="resolution" value="1.80 A"/>
    <property type="chains" value="A=19-297"/>
</dbReference>
<dbReference type="PDB" id="3GMN">
    <property type="method" value="X-ray"/>
    <property type="resolution" value="1.70 A"/>
    <property type="chains" value="A=19-297"/>
</dbReference>
<dbReference type="PDB" id="3GMO">
    <property type="method" value="X-ray"/>
    <property type="resolution" value="1.60 A"/>
    <property type="chains" value="A=19-297"/>
</dbReference>
<dbReference type="PDB" id="3GMP">
    <property type="method" value="X-ray"/>
    <property type="resolution" value="1.70 A"/>
    <property type="chains" value="A=19-297"/>
</dbReference>
<dbReference type="PDB" id="3GMQ">
    <property type="method" value="X-ray"/>
    <property type="resolution" value="1.80 A"/>
    <property type="chains" value="A=19-297"/>
</dbReference>
<dbReference type="PDB" id="3GMR">
    <property type="method" value="X-ray"/>
    <property type="resolution" value="1.90 A"/>
    <property type="chains" value="A=19-297"/>
</dbReference>
<dbReference type="PDB" id="3HE6">
    <property type="method" value="X-ray"/>
    <property type="resolution" value="2.90 A"/>
    <property type="chains" value="A=19-297"/>
</dbReference>
<dbReference type="PDB" id="3HE7">
    <property type="method" value="X-ray"/>
    <property type="resolution" value="2.80 A"/>
    <property type="chains" value="A=19-297"/>
</dbReference>
<dbReference type="PDB" id="3ILP">
    <property type="method" value="X-ray"/>
    <property type="resolution" value="1.85 A"/>
    <property type="chains" value="A=19-297"/>
</dbReference>
<dbReference type="PDB" id="3ILQ">
    <property type="method" value="X-ray"/>
    <property type="resolution" value="2.05 A"/>
    <property type="chains" value="C=19-297"/>
</dbReference>
<dbReference type="PDB" id="3MA7">
    <property type="method" value="X-ray"/>
    <property type="resolution" value="2.29 A"/>
    <property type="chains" value="A/C=19-297"/>
</dbReference>
<dbReference type="PDB" id="3O8X">
    <property type="method" value="X-ray"/>
    <property type="resolution" value="2.74 A"/>
    <property type="chains" value="A=19-297"/>
</dbReference>
<dbReference type="PDB" id="3O9W">
    <property type="method" value="X-ray"/>
    <property type="resolution" value="2.80 A"/>
    <property type="chains" value="A=19-297"/>
</dbReference>
<dbReference type="PDB" id="3QI9">
    <property type="method" value="X-ray"/>
    <property type="resolution" value="2.30 A"/>
    <property type="chains" value="A=19-297"/>
</dbReference>
<dbReference type="PDB" id="3QUX">
    <property type="method" value="X-ray"/>
    <property type="resolution" value="2.91 A"/>
    <property type="chains" value="A=19-297"/>
</dbReference>
<dbReference type="PDB" id="3QUY">
    <property type="method" value="X-ray"/>
    <property type="resolution" value="2.25 A"/>
    <property type="chains" value="A=19-297"/>
</dbReference>
<dbReference type="PDB" id="3QUZ">
    <property type="method" value="X-ray"/>
    <property type="resolution" value="2.30 A"/>
    <property type="chains" value="A=19-297"/>
</dbReference>
<dbReference type="PDB" id="3RTQ">
    <property type="method" value="X-ray"/>
    <property type="resolution" value="2.80 A"/>
    <property type="chains" value="A=19-297"/>
</dbReference>
<dbReference type="PDB" id="3RUG">
    <property type="method" value="X-ray"/>
    <property type="resolution" value="2.20 A"/>
    <property type="chains" value="A/C=19-297"/>
</dbReference>
<dbReference type="PDB" id="3RZC">
    <property type="method" value="X-ray"/>
    <property type="resolution" value="2.80 A"/>
    <property type="chains" value="A=19-297"/>
</dbReference>
<dbReference type="PDB" id="3SCM">
    <property type="method" value="X-ray"/>
    <property type="resolution" value="2.50 A"/>
    <property type="chains" value="A=19-297"/>
</dbReference>
<dbReference type="PDB" id="3SDA">
    <property type="method" value="X-ray"/>
    <property type="resolution" value="2.80 A"/>
    <property type="chains" value="A=19-297"/>
</dbReference>
<dbReference type="PDB" id="3SDC">
    <property type="method" value="X-ray"/>
    <property type="resolution" value="3.10 A"/>
    <property type="chains" value="A=19-297"/>
</dbReference>
<dbReference type="PDB" id="3SDD">
    <property type="method" value="X-ray"/>
    <property type="resolution" value="3.00 A"/>
    <property type="chains" value="A=19-297"/>
</dbReference>
<dbReference type="PDB" id="3T1F">
    <property type="method" value="X-ray"/>
    <property type="resolution" value="1.70 A"/>
    <property type="chains" value="A=19-297"/>
</dbReference>
<dbReference type="PDB" id="3TA3">
    <property type="method" value="X-ray"/>
    <property type="resolution" value="2.70 A"/>
    <property type="chains" value="A=19-297"/>
</dbReference>
<dbReference type="PDB" id="3TN0">
    <property type="method" value="X-ray"/>
    <property type="resolution" value="3.20 A"/>
    <property type="chains" value="A=19-297"/>
</dbReference>
<dbReference type="PDB" id="3TO4">
    <property type="method" value="X-ray"/>
    <property type="resolution" value="3.10 A"/>
    <property type="chains" value="A=19-297"/>
</dbReference>
<dbReference type="PDB" id="3TVM">
    <property type="method" value="X-ray"/>
    <property type="resolution" value="2.80 A"/>
    <property type="chains" value="A/E=19-297"/>
</dbReference>
<dbReference type="PDB" id="3UBX">
    <property type="method" value="X-ray"/>
    <property type="resolution" value="3.10 A"/>
    <property type="chains" value="A/D=19-297"/>
</dbReference>
<dbReference type="PDB" id="4APQ">
    <property type="method" value="X-ray"/>
    <property type="resolution" value="3.00 A"/>
    <property type="chains" value="A=19-297"/>
</dbReference>
<dbReference type="PDB" id="4EI5">
    <property type="method" value="X-ray"/>
    <property type="resolution" value="3.10 A"/>
    <property type="chains" value="A/E=19-297"/>
</dbReference>
<dbReference type="PDB" id="4ELM">
    <property type="method" value="X-ray"/>
    <property type="resolution" value="3.48 A"/>
    <property type="chains" value="A/C=19-297"/>
</dbReference>
<dbReference type="PDB" id="4IRJ">
    <property type="method" value="X-ray"/>
    <property type="resolution" value="3.00 A"/>
    <property type="chains" value="A=19-297"/>
</dbReference>
<dbReference type="PDB" id="4IRS">
    <property type="method" value="X-ray"/>
    <property type="resolution" value="2.80 A"/>
    <property type="chains" value="A=19-297"/>
</dbReference>
<dbReference type="PDB" id="4MNG">
    <property type="method" value="X-ray"/>
    <property type="resolution" value="3.01 A"/>
    <property type="chains" value="A/C=204-297"/>
</dbReference>
<dbReference type="PDB" id="4MQ7">
    <property type="method" value="X-ray"/>
    <property type="resolution" value="2.60 A"/>
    <property type="chains" value="A=205-297"/>
</dbReference>
<dbReference type="PDB" id="4MX7">
    <property type="method" value="X-ray"/>
    <property type="resolution" value="2.24 A"/>
    <property type="chains" value="A=19-297"/>
</dbReference>
<dbReference type="PDB" id="4Y16">
    <property type="method" value="X-ray"/>
    <property type="resolution" value="2.60 A"/>
    <property type="chains" value="A=19-297"/>
</dbReference>
<dbReference type="PDB" id="4Y2D">
    <property type="method" value="X-ray"/>
    <property type="resolution" value="3.05 A"/>
    <property type="chains" value="A/E=19-297"/>
</dbReference>
<dbReference type="PDB" id="4Y4F">
    <property type="method" value="X-ray"/>
    <property type="resolution" value="3.19 A"/>
    <property type="chains" value="A/E=19-297"/>
</dbReference>
<dbReference type="PDB" id="4Y4H">
    <property type="method" value="X-ray"/>
    <property type="resolution" value="3.10 A"/>
    <property type="chains" value="A/E=19-297"/>
</dbReference>
<dbReference type="PDB" id="4Y4K">
    <property type="method" value="X-ray"/>
    <property type="resolution" value="2.90 A"/>
    <property type="chains" value="A=19-297"/>
</dbReference>
<dbReference type="PDB" id="4ZAK">
    <property type="method" value="X-ray"/>
    <property type="resolution" value="2.82 A"/>
    <property type="chains" value="A=19-297"/>
</dbReference>
<dbReference type="PDB" id="5EFI">
    <property type="method" value="X-ray"/>
    <property type="resolution" value="1.80 A"/>
    <property type="chains" value="A=19-297"/>
</dbReference>
<dbReference type="PDB" id="5FKP">
    <property type="method" value="X-ray"/>
    <property type="resolution" value="1.80 A"/>
    <property type="chains" value="A=19-297"/>
</dbReference>
<dbReference type="PDB" id="5TW2">
    <property type="method" value="X-ray"/>
    <property type="resolution" value="1.75 A"/>
    <property type="chains" value="A=19-297"/>
</dbReference>
<dbReference type="PDB" id="5TW5">
    <property type="method" value="X-ray"/>
    <property type="resolution" value="1.85 A"/>
    <property type="chains" value="A=19-297"/>
</dbReference>
<dbReference type="PDB" id="5VCJ">
    <property type="method" value="X-ray"/>
    <property type="resolution" value="3.16 A"/>
    <property type="chains" value="A=19-297"/>
</dbReference>
<dbReference type="PDB" id="6BNK">
    <property type="method" value="X-ray"/>
    <property type="resolution" value="3.20 A"/>
    <property type="chains" value="A/E=19-297"/>
</dbReference>
<dbReference type="PDB" id="6BNL">
    <property type="method" value="X-ray"/>
    <property type="resolution" value="2.60 A"/>
    <property type="chains" value="A/E=19-297"/>
</dbReference>
<dbReference type="PDB" id="6C5M">
    <property type="method" value="X-ray"/>
    <property type="resolution" value="2.45 A"/>
    <property type="chains" value="A=19-297"/>
</dbReference>
<dbReference type="PDB" id="6C69">
    <property type="method" value="X-ray"/>
    <property type="resolution" value="1.94 A"/>
    <property type="chains" value="A=19-297"/>
</dbReference>
<dbReference type="PDB" id="6C6A">
    <property type="method" value="X-ray"/>
    <property type="resolution" value="2.45 A"/>
    <property type="chains" value="A=19-297"/>
</dbReference>
<dbReference type="PDB" id="6C6C">
    <property type="method" value="X-ray"/>
    <property type="resolution" value="2.08 A"/>
    <property type="chains" value="A=19-297"/>
</dbReference>
<dbReference type="PDB" id="6C6E">
    <property type="method" value="X-ray"/>
    <property type="resolution" value="2.18 A"/>
    <property type="chains" value="A=19-297"/>
</dbReference>
<dbReference type="PDB" id="6C6F">
    <property type="method" value="X-ray"/>
    <property type="resolution" value="1.67 A"/>
    <property type="chains" value="A=19-297"/>
</dbReference>
<dbReference type="PDB" id="6C6H">
    <property type="method" value="X-ray"/>
    <property type="resolution" value="2.00 A"/>
    <property type="chains" value="A=19-297"/>
</dbReference>
<dbReference type="PDB" id="6C6J">
    <property type="method" value="X-ray"/>
    <property type="resolution" value="1.79 A"/>
    <property type="chains" value="A=19-297"/>
</dbReference>
<dbReference type="PDB" id="6CW6">
    <property type="method" value="X-ray"/>
    <property type="resolution" value="2.85 A"/>
    <property type="chains" value="A=19-297"/>
</dbReference>
<dbReference type="PDB" id="6CW9">
    <property type="method" value="X-ray"/>
    <property type="resolution" value="2.00 A"/>
    <property type="chains" value="A=24-297"/>
</dbReference>
<dbReference type="PDB" id="6CWB">
    <property type="method" value="X-ray"/>
    <property type="resolution" value="2.85 A"/>
    <property type="chains" value="A=19-297"/>
</dbReference>
<dbReference type="PDB" id="6CWE">
    <property type="method" value="X-ray"/>
    <property type="resolution" value="2.20 A"/>
    <property type="chains" value="A=19-297"/>
</dbReference>
<dbReference type="PDB" id="6CX5">
    <property type="method" value="X-ray"/>
    <property type="resolution" value="2.40 A"/>
    <property type="chains" value="A=19-297"/>
</dbReference>
<dbReference type="PDB" id="6CX7">
    <property type="method" value="X-ray"/>
    <property type="resolution" value="2.60 A"/>
    <property type="chains" value="A=19-297"/>
</dbReference>
<dbReference type="PDB" id="6CX9">
    <property type="method" value="X-ray"/>
    <property type="resolution" value="2.36 A"/>
    <property type="chains" value="A=19-297"/>
</dbReference>
<dbReference type="PDB" id="6CXA">
    <property type="method" value="X-ray"/>
    <property type="resolution" value="2.65 A"/>
    <property type="chains" value="A=19-297"/>
</dbReference>
<dbReference type="PDB" id="6CXE">
    <property type="method" value="X-ray"/>
    <property type="resolution" value="2.05 A"/>
    <property type="chains" value="A=19-297"/>
</dbReference>
<dbReference type="PDB" id="6CXF">
    <property type="method" value="X-ray"/>
    <property type="resolution" value="2.50 A"/>
    <property type="chains" value="A=19-297"/>
</dbReference>
<dbReference type="PDB" id="6CYW">
    <property type="method" value="X-ray"/>
    <property type="resolution" value="1.95 A"/>
    <property type="chains" value="A=19-297"/>
</dbReference>
<dbReference type="PDB" id="6MIV">
    <property type="method" value="X-ray"/>
    <property type="resolution" value="2.05 A"/>
    <property type="chains" value="A=19-297"/>
</dbReference>
<dbReference type="PDB" id="6MIY">
    <property type="method" value="X-ray"/>
    <property type="resolution" value="2.75 A"/>
    <property type="chains" value="A/E=19-297"/>
</dbReference>
<dbReference type="PDB" id="6MJ4">
    <property type="method" value="X-ray"/>
    <property type="resolution" value="2.00 A"/>
    <property type="chains" value="A=19-297"/>
</dbReference>
<dbReference type="PDB" id="6MJ6">
    <property type="method" value="X-ray"/>
    <property type="resolution" value="2.45 A"/>
    <property type="chains" value="A=19-297"/>
</dbReference>
<dbReference type="PDB" id="6MJA">
    <property type="method" value="X-ray"/>
    <property type="resolution" value="2.35 A"/>
    <property type="chains" value="A=19-297"/>
</dbReference>
<dbReference type="PDB" id="6MJI">
    <property type="method" value="X-ray"/>
    <property type="resolution" value="2.30 A"/>
    <property type="chains" value="A=19-297"/>
</dbReference>
<dbReference type="PDB" id="6MJJ">
    <property type="method" value="X-ray"/>
    <property type="resolution" value="1.93 A"/>
    <property type="chains" value="A=19-297"/>
</dbReference>
<dbReference type="PDB" id="6MJQ">
    <property type="method" value="X-ray"/>
    <property type="resolution" value="3.00 A"/>
    <property type="chains" value="A/E=19-297"/>
</dbReference>
<dbReference type="PDB" id="6MSS">
    <property type="method" value="X-ray"/>
    <property type="resolution" value="3.00 A"/>
    <property type="chains" value="C=19-297"/>
</dbReference>
<dbReference type="PDB" id="6OJP">
    <property type="method" value="X-ray"/>
    <property type="resolution" value="2.17 A"/>
    <property type="chains" value="A=19-297"/>
</dbReference>
<dbReference type="PDB" id="6OMG">
    <property type="method" value="X-ray"/>
    <property type="resolution" value="2.10 A"/>
    <property type="chains" value="A=19-297"/>
</dbReference>
<dbReference type="PDB" id="6OOR">
    <property type="method" value="X-ray"/>
    <property type="resolution" value="2.45 A"/>
    <property type="chains" value="A=19-297"/>
</dbReference>
<dbReference type="PDB" id="6XNG">
    <property type="method" value="X-ray"/>
    <property type="resolution" value="2.79 A"/>
    <property type="chains" value="A=19-297"/>
</dbReference>
<dbReference type="PDB" id="7M72">
    <property type="method" value="X-ray"/>
    <property type="resolution" value="2.40 A"/>
    <property type="chains" value="A=19-297"/>
</dbReference>
<dbReference type="PDB" id="8T4Z">
    <property type="method" value="X-ray"/>
    <property type="resolution" value="2.69 A"/>
    <property type="chains" value="A=19-297"/>
</dbReference>
<dbReference type="PDBsum" id="1CD1"/>
<dbReference type="PDBsum" id="1Z5L"/>
<dbReference type="PDBsum" id="1ZHN"/>
<dbReference type="PDBsum" id="2AKR"/>
<dbReference type="PDBsum" id="2FIK"/>
<dbReference type="PDBsum" id="2GAZ"/>
<dbReference type="PDBsum" id="2Q7Y"/>
<dbReference type="PDBsum" id="3ARB"/>
<dbReference type="PDBsum" id="3ARD"/>
<dbReference type="PDBsum" id="3ARE"/>
<dbReference type="PDBsum" id="3ARF"/>
<dbReference type="PDBsum" id="3ARG"/>
<dbReference type="PDBsum" id="3AU1"/>
<dbReference type="PDBsum" id="3G08"/>
<dbReference type="PDBsum" id="3GML"/>
<dbReference type="PDBsum" id="3GMM"/>
<dbReference type="PDBsum" id="3GMN"/>
<dbReference type="PDBsum" id="3GMO"/>
<dbReference type="PDBsum" id="3GMP"/>
<dbReference type="PDBsum" id="3GMQ"/>
<dbReference type="PDBsum" id="3GMR"/>
<dbReference type="PDBsum" id="3HE6"/>
<dbReference type="PDBsum" id="3HE7"/>
<dbReference type="PDBsum" id="3ILP"/>
<dbReference type="PDBsum" id="3ILQ"/>
<dbReference type="PDBsum" id="3MA7"/>
<dbReference type="PDBsum" id="3O8X"/>
<dbReference type="PDBsum" id="3O9W"/>
<dbReference type="PDBsum" id="3QI9"/>
<dbReference type="PDBsum" id="3QUX"/>
<dbReference type="PDBsum" id="3QUY"/>
<dbReference type="PDBsum" id="3QUZ"/>
<dbReference type="PDBsum" id="3RTQ"/>
<dbReference type="PDBsum" id="3RUG"/>
<dbReference type="PDBsum" id="3RZC"/>
<dbReference type="PDBsum" id="3SCM"/>
<dbReference type="PDBsum" id="3SDA"/>
<dbReference type="PDBsum" id="3SDC"/>
<dbReference type="PDBsum" id="3SDD"/>
<dbReference type="PDBsum" id="3T1F"/>
<dbReference type="PDBsum" id="3TA3"/>
<dbReference type="PDBsum" id="3TN0"/>
<dbReference type="PDBsum" id="3TO4"/>
<dbReference type="PDBsum" id="3TVM"/>
<dbReference type="PDBsum" id="3UBX"/>
<dbReference type="PDBsum" id="4APQ"/>
<dbReference type="PDBsum" id="4EI5"/>
<dbReference type="PDBsum" id="4ELM"/>
<dbReference type="PDBsum" id="4IRJ"/>
<dbReference type="PDBsum" id="4IRS"/>
<dbReference type="PDBsum" id="4MNG"/>
<dbReference type="PDBsum" id="4MQ7"/>
<dbReference type="PDBsum" id="4MX7"/>
<dbReference type="PDBsum" id="4Y16"/>
<dbReference type="PDBsum" id="4Y2D"/>
<dbReference type="PDBsum" id="4Y4F"/>
<dbReference type="PDBsum" id="4Y4H"/>
<dbReference type="PDBsum" id="4Y4K"/>
<dbReference type="PDBsum" id="4ZAK"/>
<dbReference type="PDBsum" id="5EFI"/>
<dbReference type="PDBsum" id="5FKP"/>
<dbReference type="PDBsum" id="5TW2"/>
<dbReference type="PDBsum" id="5TW5"/>
<dbReference type="PDBsum" id="5VCJ"/>
<dbReference type="PDBsum" id="6BNK"/>
<dbReference type="PDBsum" id="6BNL"/>
<dbReference type="PDBsum" id="6C5M"/>
<dbReference type="PDBsum" id="6C69"/>
<dbReference type="PDBsum" id="6C6A"/>
<dbReference type="PDBsum" id="6C6C"/>
<dbReference type="PDBsum" id="6C6E"/>
<dbReference type="PDBsum" id="6C6F"/>
<dbReference type="PDBsum" id="6C6H"/>
<dbReference type="PDBsum" id="6C6J"/>
<dbReference type="PDBsum" id="6CW6"/>
<dbReference type="PDBsum" id="6CW9"/>
<dbReference type="PDBsum" id="6CWB"/>
<dbReference type="PDBsum" id="6CWE"/>
<dbReference type="PDBsum" id="6CX5"/>
<dbReference type="PDBsum" id="6CX7"/>
<dbReference type="PDBsum" id="6CX9"/>
<dbReference type="PDBsum" id="6CXA"/>
<dbReference type="PDBsum" id="6CXE"/>
<dbReference type="PDBsum" id="6CXF"/>
<dbReference type="PDBsum" id="6CYW"/>
<dbReference type="PDBsum" id="6MIV"/>
<dbReference type="PDBsum" id="6MIY"/>
<dbReference type="PDBsum" id="6MJ4"/>
<dbReference type="PDBsum" id="6MJ6"/>
<dbReference type="PDBsum" id="6MJA"/>
<dbReference type="PDBsum" id="6MJI"/>
<dbReference type="PDBsum" id="6MJJ"/>
<dbReference type="PDBsum" id="6MJQ"/>
<dbReference type="PDBsum" id="6MSS"/>
<dbReference type="PDBsum" id="6OJP"/>
<dbReference type="PDBsum" id="6OMG"/>
<dbReference type="PDBsum" id="6OOR"/>
<dbReference type="PDBsum" id="6XNG"/>
<dbReference type="PDBsum" id="7M72"/>
<dbReference type="PDBsum" id="8T4Z"/>
<dbReference type="SMR" id="P11609"/>
<dbReference type="DIP" id="DIP-6127N"/>
<dbReference type="FunCoup" id="P11609">
    <property type="interactions" value="231"/>
</dbReference>
<dbReference type="IntAct" id="P11609">
    <property type="interactions" value="1"/>
</dbReference>
<dbReference type="STRING" id="10090.ENSMUSP00000029717"/>
<dbReference type="ChEMBL" id="CHEMBL4523182"/>
<dbReference type="GlyConnect" id="2130">
    <property type="glycosylation" value="1 N-Linked glycan (1 site)"/>
</dbReference>
<dbReference type="GlyCosmos" id="P11609">
    <property type="glycosylation" value="5 sites, 1 glycan"/>
</dbReference>
<dbReference type="GlyGen" id="P11609">
    <property type="glycosylation" value="5 sites, 4 N-linked glycans (3 sites)"/>
</dbReference>
<dbReference type="iPTMnet" id="P11609"/>
<dbReference type="PhosphoSitePlus" id="P11609"/>
<dbReference type="SwissPalm" id="P11609"/>
<dbReference type="jPOST" id="P11609"/>
<dbReference type="PaxDb" id="10090-ENSMUSP00000029717"/>
<dbReference type="PeptideAtlas" id="P11609"/>
<dbReference type="ProteomicsDB" id="265621"/>
<dbReference type="Pumba" id="P11609"/>
<dbReference type="ABCD" id="P11609">
    <property type="antibodies" value="2 sequenced antibodies"/>
</dbReference>
<dbReference type="DNASU" id="12479"/>
<dbReference type="GeneID" id="12479"/>
<dbReference type="KEGG" id="mmu:12479"/>
<dbReference type="UCSC" id="uc012cre.1">
    <property type="organism name" value="mouse"/>
</dbReference>
<dbReference type="AGR" id="MGI:107674"/>
<dbReference type="CTD" id="12479"/>
<dbReference type="MGI" id="MGI:107674">
    <property type="gene designation" value="Cd1d1"/>
</dbReference>
<dbReference type="eggNOG" id="ENOG502SJH6">
    <property type="taxonomic scope" value="Eukaryota"/>
</dbReference>
<dbReference type="InParanoid" id="P11609"/>
<dbReference type="OrthoDB" id="8890485at2759"/>
<dbReference type="PhylomeDB" id="P11609"/>
<dbReference type="TreeFam" id="TF336723"/>
<dbReference type="Reactome" id="R-MMU-198933">
    <property type="pathway name" value="Immunoregulatory interactions between a Lymphoid and a non-Lymphoid cell"/>
</dbReference>
<dbReference type="BioGRID-ORCS" id="12479">
    <property type="hits" value="1 hit in 80 CRISPR screens"/>
</dbReference>
<dbReference type="EvolutionaryTrace" id="P11609"/>
<dbReference type="PRO" id="PR:P11609"/>
<dbReference type="Proteomes" id="UP000000589">
    <property type="component" value="Unplaced"/>
</dbReference>
<dbReference type="RNAct" id="P11609">
    <property type="molecule type" value="protein"/>
</dbReference>
<dbReference type="GO" id="GO:0005769">
    <property type="term" value="C:early endosome"/>
    <property type="evidence" value="ECO:0000314"/>
    <property type="project" value="MGI"/>
</dbReference>
<dbReference type="GO" id="GO:0010008">
    <property type="term" value="C:endosome membrane"/>
    <property type="evidence" value="ECO:0007669"/>
    <property type="project" value="UniProtKB-SubCell"/>
</dbReference>
<dbReference type="GO" id="GO:0009897">
    <property type="term" value="C:external side of plasma membrane"/>
    <property type="evidence" value="ECO:0000314"/>
    <property type="project" value="MGI"/>
</dbReference>
<dbReference type="GO" id="GO:0005770">
    <property type="term" value="C:late endosome"/>
    <property type="evidence" value="ECO:0000314"/>
    <property type="project" value="MGI"/>
</dbReference>
<dbReference type="GO" id="GO:0005765">
    <property type="term" value="C:lysosomal membrane"/>
    <property type="evidence" value="ECO:0007669"/>
    <property type="project" value="UniProtKB-SubCell"/>
</dbReference>
<dbReference type="GO" id="GO:0005764">
    <property type="term" value="C:lysosome"/>
    <property type="evidence" value="ECO:0000314"/>
    <property type="project" value="MGI"/>
</dbReference>
<dbReference type="GO" id="GO:0030883">
    <property type="term" value="F:endogenous lipid antigen binding"/>
    <property type="evidence" value="ECO:0000314"/>
    <property type="project" value="MGI"/>
</dbReference>
<dbReference type="GO" id="GO:0042608">
    <property type="term" value="F:T cell receptor binding"/>
    <property type="evidence" value="ECO:0000314"/>
    <property type="project" value="MGI"/>
</dbReference>
<dbReference type="GO" id="GO:0019882">
    <property type="term" value="P:antigen processing and presentation"/>
    <property type="evidence" value="ECO:0000314"/>
    <property type="project" value="MGI"/>
</dbReference>
<dbReference type="GO" id="GO:0048007">
    <property type="term" value="P:antigen processing and presentation, exogenous lipid antigen via MHC class Ib"/>
    <property type="evidence" value="ECO:0000314"/>
    <property type="project" value="MGI"/>
</dbReference>
<dbReference type="GO" id="GO:0045087">
    <property type="term" value="P:innate immune response"/>
    <property type="evidence" value="ECO:0007669"/>
    <property type="project" value="UniProtKB-KW"/>
</dbReference>
<dbReference type="GO" id="GO:0001865">
    <property type="term" value="P:NK T cell differentiation"/>
    <property type="evidence" value="ECO:0000315"/>
    <property type="project" value="CACAO"/>
</dbReference>
<dbReference type="GO" id="GO:0032743">
    <property type="term" value="P:positive regulation of interleukin-2 production"/>
    <property type="evidence" value="ECO:0000314"/>
    <property type="project" value="MGI"/>
</dbReference>
<dbReference type="GO" id="GO:0032753">
    <property type="term" value="P:positive regulation of interleukin-4 production"/>
    <property type="evidence" value="ECO:0000314"/>
    <property type="project" value="MGI"/>
</dbReference>
<dbReference type="GO" id="GO:0043032">
    <property type="term" value="P:positive regulation of macrophage activation"/>
    <property type="evidence" value="ECO:0000314"/>
    <property type="project" value="MGI"/>
</dbReference>
<dbReference type="GO" id="GO:0051135">
    <property type="term" value="P:positive regulation of NK T cell activation"/>
    <property type="evidence" value="ECO:0000314"/>
    <property type="project" value="MGI"/>
</dbReference>
<dbReference type="GO" id="GO:0051138">
    <property type="term" value="P:positive regulation of NK T cell differentiation"/>
    <property type="evidence" value="ECO:0000315"/>
    <property type="project" value="MGI"/>
</dbReference>
<dbReference type="GO" id="GO:0001916">
    <property type="term" value="P:positive regulation of T cell mediated cytotoxicity"/>
    <property type="evidence" value="ECO:0000314"/>
    <property type="project" value="MGI"/>
</dbReference>
<dbReference type="GO" id="GO:0032729">
    <property type="term" value="P:positive regulation of type II interferon production"/>
    <property type="evidence" value="ECO:0000315"/>
    <property type="project" value="MGI"/>
</dbReference>
<dbReference type="GO" id="GO:0045059">
    <property type="term" value="P:positive thymic T cell selection"/>
    <property type="evidence" value="ECO:0000315"/>
    <property type="project" value="MGI"/>
</dbReference>
<dbReference type="GO" id="GO:0033084">
    <property type="term" value="P:regulation of immature T cell proliferation in thymus"/>
    <property type="evidence" value="ECO:0000315"/>
    <property type="project" value="CACAO"/>
</dbReference>
<dbReference type="GO" id="GO:0050776">
    <property type="term" value="P:regulation of immune response"/>
    <property type="evidence" value="ECO:0000315"/>
    <property type="project" value="MGI"/>
</dbReference>
<dbReference type="CDD" id="cd21029">
    <property type="entry name" value="IgC1_CD1"/>
    <property type="match status" value="1"/>
</dbReference>
<dbReference type="FunFam" id="2.60.40.10:FF:000254">
    <property type="entry name" value="Antigen-presenting glycoprotein CD1d1"/>
    <property type="match status" value="1"/>
</dbReference>
<dbReference type="FunFam" id="3.30.500.10:FF:000002">
    <property type="entry name" value="Antigen-presenting glycoprotein CD1d1"/>
    <property type="match status" value="1"/>
</dbReference>
<dbReference type="Gene3D" id="2.60.40.10">
    <property type="entry name" value="Immunoglobulins"/>
    <property type="match status" value="1"/>
</dbReference>
<dbReference type="Gene3D" id="3.30.500.10">
    <property type="entry name" value="MHC class I-like antigen recognition-like"/>
    <property type="match status" value="1"/>
</dbReference>
<dbReference type="InterPro" id="IPR007110">
    <property type="entry name" value="Ig-like_dom"/>
</dbReference>
<dbReference type="InterPro" id="IPR036179">
    <property type="entry name" value="Ig-like_dom_sf"/>
</dbReference>
<dbReference type="InterPro" id="IPR013783">
    <property type="entry name" value="Ig-like_fold"/>
</dbReference>
<dbReference type="InterPro" id="IPR003597">
    <property type="entry name" value="Ig_C1-set"/>
</dbReference>
<dbReference type="InterPro" id="IPR050208">
    <property type="entry name" value="MHC_class-I_related"/>
</dbReference>
<dbReference type="InterPro" id="IPR011161">
    <property type="entry name" value="MHC_I-like_Ag-recog"/>
</dbReference>
<dbReference type="InterPro" id="IPR037055">
    <property type="entry name" value="MHC_I-like_Ag-recog_sf"/>
</dbReference>
<dbReference type="InterPro" id="IPR011162">
    <property type="entry name" value="MHC_I/II-like_Ag-recog"/>
</dbReference>
<dbReference type="PANTHER" id="PTHR16675:SF175">
    <property type="entry name" value="ANTIGEN-PRESENTING GLYCOPROTEIN CD1D"/>
    <property type="match status" value="1"/>
</dbReference>
<dbReference type="PANTHER" id="PTHR16675">
    <property type="entry name" value="MHC CLASS I-RELATED"/>
    <property type="match status" value="1"/>
</dbReference>
<dbReference type="Pfam" id="PF07654">
    <property type="entry name" value="C1-set"/>
    <property type="match status" value="1"/>
</dbReference>
<dbReference type="Pfam" id="PF16497">
    <property type="entry name" value="MHC_I_3"/>
    <property type="match status" value="1"/>
</dbReference>
<dbReference type="SMART" id="SM00407">
    <property type="entry name" value="IGc1"/>
    <property type="match status" value="1"/>
</dbReference>
<dbReference type="SUPFAM" id="SSF48726">
    <property type="entry name" value="Immunoglobulin"/>
    <property type="match status" value="1"/>
</dbReference>
<dbReference type="SUPFAM" id="SSF54452">
    <property type="entry name" value="MHC antigen-recognition domain"/>
    <property type="match status" value="1"/>
</dbReference>
<dbReference type="PROSITE" id="PS50835">
    <property type="entry name" value="IG_LIKE"/>
    <property type="match status" value="1"/>
</dbReference>
<sequence>MRYLPWLLLWAFLQVWGQSEAQQKNYTFRCLQMSSFANRSWSRTDSVVWLGDLQTHRWSNDSATISFTKPWSQGKLSNQQWEKLQHMFQVYRVSFTRDIQELVKMMSPKEDYPIEIQLSAGCEMYPGNASESFLHVAFQGKYVVRFWGTSWQTVPGAPSWLDLPIKVLNADQGTSATVQMLLNDTCPLFVRGLLEAGKSDLEKQEKPVAWLSSVPSSADGHRQLVCHVSGFYPKPVWVMWMRGDQEQQGTHRGDFLPNADETWYLQATLDVEAGEEAGLACRVKHSSLGGQDIILYWDARQAPVGLIVFIVLIMLVVVGAVVYYIWRRRSAYQDIR</sequence>
<proteinExistence type="evidence at protein level"/>
<gene>
    <name type="primary">Cd1d1</name>
    <name type="synonym">Cd1.1</name>
</gene>
<reference key="1">
    <citation type="journal article" date="1991" name="J. Immunol.">
        <title>Isolation and expression of cDNA encoding the murine homologues of CD1.</title>
        <authorList>
            <person name="Balk S.P."/>
            <person name="Bleicher P.A."/>
            <person name="Terhorst C."/>
        </authorList>
    </citation>
    <scope>NUCLEOTIDE SEQUENCE [MRNA]</scope>
</reference>
<reference key="2">
    <citation type="journal article" date="2005" name="Science">
        <title>The transcriptional landscape of the mammalian genome.</title>
        <authorList>
            <person name="Carninci P."/>
            <person name="Kasukawa T."/>
            <person name="Katayama S."/>
            <person name="Gough J."/>
            <person name="Frith M.C."/>
            <person name="Maeda N."/>
            <person name="Oyama R."/>
            <person name="Ravasi T."/>
            <person name="Lenhard B."/>
            <person name="Wells C."/>
            <person name="Kodzius R."/>
            <person name="Shimokawa K."/>
            <person name="Bajic V.B."/>
            <person name="Brenner S.E."/>
            <person name="Batalov S."/>
            <person name="Forrest A.R."/>
            <person name="Zavolan M."/>
            <person name="Davis M.J."/>
            <person name="Wilming L.G."/>
            <person name="Aidinis V."/>
            <person name="Allen J.E."/>
            <person name="Ambesi-Impiombato A."/>
            <person name="Apweiler R."/>
            <person name="Aturaliya R.N."/>
            <person name="Bailey T.L."/>
            <person name="Bansal M."/>
            <person name="Baxter L."/>
            <person name="Beisel K.W."/>
            <person name="Bersano T."/>
            <person name="Bono H."/>
            <person name="Chalk A.M."/>
            <person name="Chiu K.P."/>
            <person name="Choudhary V."/>
            <person name="Christoffels A."/>
            <person name="Clutterbuck D.R."/>
            <person name="Crowe M.L."/>
            <person name="Dalla E."/>
            <person name="Dalrymple B.P."/>
            <person name="de Bono B."/>
            <person name="Della Gatta G."/>
            <person name="di Bernardo D."/>
            <person name="Down T."/>
            <person name="Engstrom P."/>
            <person name="Fagiolini M."/>
            <person name="Faulkner G."/>
            <person name="Fletcher C.F."/>
            <person name="Fukushima T."/>
            <person name="Furuno M."/>
            <person name="Futaki S."/>
            <person name="Gariboldi M."/>
            <person name="Georgii-Hemming P."/>
            <person name="Gingeras T.R."/>
            <person name="Gojobori T."/>
            <person name="Green R.E."/>
            <person name="Gustincich S."/>
            <person name="Harbers M."/>
            <person name="Hayashi Y."/>
            <person name="Hensch T.K."/>
            <person name="Hirokawa N."/>
            <person name="Hill D."/>
            <person name="Huminiecki L."/>
            <person name="Iacono M."/>
            <person name="Ikeo K."/>
            <person name="Iwama A."/>
            <person name="Ishikawa T."/>
            <person name="Jakt M."/>
            <person name="Kanapin A."/>
            <person name="Katoh M."/>
            <person name="Kawasawa Y."/>
            <person name="Kelso J."/>
            <person name="Kitamura H."/>
            <person name="Kitano H."/>
            <person name="Kollias G."/>
            <person name="Krishnan S.P."/>
            <person name="Kruger A."/>
            <person name="Kummerfeld S.K."/>
            <person name="Kurochkin I.V."/>
            <person name="Lareau L.F."/>
            <person name="Lazarevic D."/>
            <person name="Lipovich L."/>
            <person name="Liu J."/>
            <person name="Liuni S."/>
            <person name="McWilliam S."/>
            <person name="Madan Babu M."/>
            <person name="Madera M."/>
            <person name="Marchionni L."/>
            <person name="Matsuda H."/>
            <person name="Matsuzawa S."/>
            <person name="Miki H."/>
            <person name="Mignone F."/>
            <person name="Miyake S."/>
            <person name="Morris K."/>
            <person name="Mottagui-Tabar S."/>
            <person name="Mulder N."/>
            <person name="Nakano N."/>
            <person name="Nakauchi H."/>
            <person name="Ng P."/>
            <person name="Nilsson R."/>
            <person name="Nishiguchi S."/>
            <person name="Nishikawa S."/>
            <person name="Nori F."/>
            <person name="Ohara O."/>
            <person name="Okazaki Y."/>
            <person name="Orlando V."/>
            <person name="Pang K.C."/>
            <person name="Pavan W.J."/>
            <person name="Pavesi G."/>
            <person name="Pesole G."/>
            <person name="Petrovsky N."/>
            <person name="Piazza S."/>
            <person name="Reed J."/>
            <person name="Reid J.F."/>
            <person name="Ring B.Z."/>
            <person name="Ringwald M."/>
            <person name="Rost B."/>
            <person name="Ruan Y."/>
            <person name="Salzberg S.L."/>
            <person name="Sandelin A."/>
            <person name="Schneider C."/>
            <person name="Schoenbach C."/>
            <person name="Sekiguchi K."/>
            <person name="Semple C.A."/>
            <person name="Seno S."/>
            <person name="Sessa L."/>
            <person name="Sheng Y."/>
            <person name="Shibata Y."/>
            <person name="Shimada H."/>
            <person name="Shimada K."/>
            <person name="Silva D."/>
            <person name="Sinclair B."/>
            <person name="Sperling S."/>
            <person name="Stupka E."/>
            <person name="Sugiura K."/>
            <person name="Sultana R."/>
            <person name="Takenaka Y."/>
            <person name="Taki K."/>
            <person name="Tammoja K."/>
            <person name="Tan S.L."/>
            <person name="Tang S."/>
            <person name="Taylor M.S."/>
            <person name="Tegner J."/>
            <person name="Teichmann S.A."/>
            <person name="Ueda H.R."/>
            <person name="van Nimwegen E."/>
            <person name="Verardo R."/>
            <person name="Wei C.L."/>
            <person name="Yagi K."/>
            <person name="Yamanishi H."/>
            <person name="Zabarovsky E."/>
            <person name="Zhu S."/>
            <person name="Zimmer A."/>
            <person name="Hide W."/>
            <person name="Bult C."/>
            <person name="Grimmond S.M."/>
            <person name="Teasdale R.D."/>
            <person name="Liu E.T."/>
            <person name="Brusic V."/>
            <person name="Quackenbush J."/>
            <person name="Wahlestedt C."/>
            <person name="Mattick J.S."/>
            <person name="Hume D.A."/>
            <person name="Kai C."/>
            <person name="Sasaki D."/>
            <person name="Tomaru Y."/>
            <person name="Fukuda S."/>
            <person name="Kanamori-Katayama M."/>
            <person name="Suzuki M."/>
            <person name="Aoki J."/>
            <person name="Arakawa T."/>
            <person name="Iida J."/>
            <person name="Imamura K."/>
            <person name="Itoh M."/>
            <person name="Kato T."/>
            <person name="Kawaji H."/>
            <person name="Kawagashira N."/>
            <person name="Kawashima T."/>
            <person name="Kojima M."/>
            <person name="Kondo S."/>
            <person name="Konno H."/>
            <person name="Nakano K."/>
            <person name="Ninomiya N."/>
            <person name="Nishio T."/>
            <person name="Okada M."/>
            <person name="Plessy C."/>
            <person name="Shibata K."/>
            <person name="Shiraki T."/>
            <person name="Suzuki S."/>
            <person name="Tagami M."/>
            <person name="Waki K."/>
            <person name="Watahiki A."/>
            <person name="Okamura-Oho Y."/>
            <person name="Suzuki H."/>
            <person name="Kawai J."/>
            <person name="Hayashizaki Y."/>
        </authorList>
    </citation>
    <scope>NUCLEOTIDE SEQUENCE [LARGE SCALE MRNA]</scope>
    <source>
        <strain>C57BL/6J</strain>
        <tissue>Kidney</tissue>
    </source>
</reference>
<reference key="3">
    <citation type="journal article" date="1988" name="EMBO J.">
        <title>Mouse CD1 is distinct from and co-exists with TL in the same thymus.</title>
        <authorList>
            <person name="Bradbury A."/>
            <person name="Belt K.T."/>
            <person name="Neri T.M."/>
            <person name="Milstein C."/>
            <person name="Calabi F."/>
        </authorList>
    </citation>
    <scope>NUCLEOTIDE SEQUENCE [GENOMIC DNA] OF 1-297</scope>
    <source>
        <tissue>Thymus</tissue>
    </source>
</reference>
<reference key="4">
    <citation type="journal article" date="2001" name="Immunity">
        <title>CD1d endosomal trafficking is independently regulated by an intrinsic CD1d-encoded tyrosine motif and by the invariant chain.</title>
        <authorList>
            <person name="Jayawardena-Wolf J."/>
            <person name="Benlagha K."/>
            <person name="Chiu Y.-H."/>
            <person name="Mehr R."/>
            <person name="Bendelac A."/>
        </authorList>
    </citation>
    <scope>FUNCTION</scope>
    <scope>SUBCELLULAR LOCATION</scope>
    <scope>INTERACTION WITH CD74</scope>
    <scope>GLYCOSYLATION</scope>
</reference>
<reference key="5">
    <citation type="journal article" date="2010" name="Cell">
        <title>A tissue-specific atlas of mouse protein phosphorylation and expression.</title>
        <authorList>
            <person name="Huttlin E.L."/>
            <person name="Jedrychowski M.P."/>
            <person name="Elias J.E."/>
            <person name="Goswami T."/>
            <person name="Rad R."/>
            <person name="Beausoleil S.A."/>
            <person name="Villen J."/>
            <person name="Haas W."/>
            <person name="Sowa M.E."/>
            <person name="Gygi S.P."/>
        </authorList>
    </citation>
    <scope>IDENTIFICATION BY MASS SPECTROMETRY [LARGE SCALE ANALYSIS]</scope>
    <source>
        <tissue>Brown adipose tissue</tissue>
        <tissue>Liver</tissue>
        <tissue>Spleen</tissue>
    </source>
</reference>
<reference key="6">
    <citation type="journal article" date="1997" name="Science">
        <title>Crystal structure of mouse CD1: an MHC-like fold with a large hydrophobic binding groove.</title>
        <authorList>
            <person name="Zeng Z."/>
            <person name="Castano A.R."/>
            <person name="Segelke B.W."/>
            <person name="Stura E.A."/>
            <person name="Peterson P.A."/>
            <person name="Wilson I.A."/>
        </authorList>
    </citation>
    <scope>X-RAY CRYSTALLOGRAPHY (2.67 ANGSTROMS) OF 25-297 IN COMPLEX WITH B2M</scope>
    <scope>DISULFIDE BONDS</scope>
</reference>
<reference key="7">
    <citation type="journal article" date="2005" name="J. Exp. Med.">
        <title>Structural basis for CD1d presentation of a sulfatide derived from myelin and its implications for autoimmunity.</title>
        <authorList>
            <person name="Zajonc D.M."/>
            <person name="Maricic I."/>
            <person name="Wu D."/>
            <person name="Halder R."/>
            <person name="Roy K."/>
            <person name="Wong C.-H."/>
            <person name="Kumar V."/>
            <person name="Wilson I.A."/>
        </authorList>
    </citation>
    <scope>X-RAY CRYSTALLOGRAPHY (1.9 ANGSTROMS) OF 19-297 IN COMPLEX WITH B2M AND CIS-TETRACOSENOYL SULFATIDE</scope>
    <scope>FUNCTION</scope>
    <scope>GLYCOSYLATION</scope>
</reference>
<reference key="8">
    <citation type="journal article" date="2005" name="J. Immunol.">
        <title>Crystal structure of mouse CD1d bound to the self ligand phosphatidylcholine: a molecular basis for NKT cell activation.</title>
        <authorList>
            <person name="Giabbai B."/>
            <person name="Sidobre S."/>
            <person name="Crispin M.D.M."/>
            <person name="Sanchez-Ruiz Y."/>
            <person name="Bachi A."/>
            <person name="Kronenberg M."/>
            <person name="Wilson I.A."/>
            <person name="Degano M."/>
        </authorList>
    </citation>
    <scope>X-RAY CRYSTALLOGRAPHY (2.8 ANGSTROMS) OF 25-297 IN COMPLEX WITH PHOSPHATIDYLCHOLINE AND B2M</scope>
    <scope>GLYCOSYLATION AT ASN-38; ASN-60 AND ASN-183</scope>
    <scope>DISULFIDE BONDS</scope>
</reference>
<reference key="9">
    <citation type="journal article" date="2005" name="Nat. Immunol.">
        <title>Structure and function of a potent agonist for the semi-invariant natural killer T cell receptor.</title>
        <authorList>
            <person name="Zajonc D.M."/>
            <person name="Cantu C. III"/>
            <person name="Mattner J."/>
            <person name="Zhou D."/>
            <person name="Savage P.B."/>
            <person name="Bendelac A."/>
            <person name="Wilson I.A."/>
            <person name="Teyton L."/>
        </authorList>
    </citation>
    <scope>X-RAY CRYSTALLOGRAPHY (2.2 ANGSTROMS) OF 19-297 IN COMPLEX WITH GALACTOSYLCERAMIDE AND B2M</scope>
    <scope>FUNCTION</scope>
    <scope>GLYCOSYLATION AT ASN-38; ASN-60 AND ASN-183</scope>
    <scope>DISULFIDE BONDS</scope>
</reference>
<reference key="10">
    <citation type="journal article" date="2006" name="Proc. Natl. Acad. Sci. U.S.A.">
        <title>Design of natural killer T cell activators: structure and function of a microbial glycosphingolipid bound to mouse CD1d.</title>
        <authorList>
            <person name="Wu D."/>
            <person name="Zajonc D.M."/>
            <person name="Fujio M."/>
            <person name="Sullivan B.A."/>
            <person name="Kinjo Y."/>
            <person name="Kronenberg M."/>
            <person name="Wilson I.A."/>
            <person name="Wong C.-H."/>
        </authorList>
    </citation>
    <scope>X-RAY CRYSTALLOGRAPHY (1.8 ANGSTROMS) OF 19-297 IN COMPLEX WITH GLYCOSPHINGOLIPID AND B2M</scope>
    <scope>GLYCOSYLATION AT ASN-38; ASN-60 AND ASN-183</scope>
    <scope>DISULFIDE BONDS</scope>
</reference>